<comment type="miscellaneous">
    <text>On the 2D-gel the determined pI of this unknown protein is: 5.9, its MW is: 26.5 kDa.</text>
</comment>
<organism>
    <name type="scientific">Zea mays</name>
    <name type="common">Maize</name>
    <dbReference type="NCBI Taxonomy" id="4577"/>
    <lineage>
        <taxon>Eukaryota</taxon>
        <taxon>Viridiplantae</taxon>
        <taxon>Streptophyta</taxon>
        <taxon>Embryophyta</taxon>
        <taxon>Tracheophyta</taxon>
        <taxon>Spermatophyta</taxon>
        <taxon>Magnoliopsida</taxon>
        <taxon>Liliopsida</taxon>
        <taxon>Poales</taxon>
        <taxon>Poaceae</taxon>
        <taxon>PACMAD clade</taxon>
        <taxon>Panicoideae</taxon>
        <taxon>Andropogonodae</taxon>
        <taxon>Andropogoneae</taxon>
        <taxon>Tripsacinae</taxon>
        <taxon>Zea</taxon>
    </lineage>
</organism>
<proteinExistence type="evidence at protein level"/>
<reference key="1">
    <citation type="journal article" date="1996" name="Theor. Appl. Genet.">
        <title>The maize two dimensional gel protein database: towards an integrated genome analysis program.</title>
        <authorList>
            <person name="Touzet P."/>
            <person name="Riccardi F."/>
            <person name="Morin C."/>
            <person name="Damerval C."/>
            <person name="Huet J.-C."/>
            <person name="Pernollet J.-C."/>
            <person name="Zivy M."/>
            <person name="de Vienne D."/>
        </authorList>
        <dbReference type="AGRICOLA" id="IND20551642"/>
    </citation>
    <scope>PROTEIN SEQUENCE</scope>
    <source>
        <tissue>Coleoptile</tissue>
    </source>
</reference>
<name>UC21_MAIZE</name>
<keyword id="KW-0903">Direct protein sequencing</keyword>
<keyword id="KW-1185">Reference proteome</keyword>
<accession>P80627</accession>
<feature type="chain" id="PRO_0000055517" description="Unknown protein from spot 443 of 2D-PAGE of etiolated coleoptile">
    <location>
        <begin position="1" status="less than"/>
        <end position="18" status="greater than"/>
    </location>
</feature>
<feature type="non-terminal residue">
    <location>
        <position position="1"/>
    </location>
</feature>
<feature type="non-terminal residue">
    <location>
        <position position="18"/>
    </location>
</feature>
<dbReference type="MaizeGDB" id="123953"/>
<dbReference type="InParanoid" id="P80627"/>
<dbReference type="Proteomes" id="UP000007305">
    <property type="component" value="Unplaced"/>
</dbReference>
<sequence length="18" mass="1939">AKNYPTVSAEYSXAVEKA</sequence>
<protein>
    <recommendedName>
        <fullName>Unknown protein from spot 443 of 2D-PAGE of etiolated coleoptile</fullName>
    </recommendedName>
</protein>